<sequence>MRILVIITCIVAVATATKTCEANEELVSCHNTCEPQCGYTPKACTEQCIMNTCDCKDGFVRNSLGKCVEVSECTKETTKCPENETFFGCGTACEATCEKPNPTVCTKQCIVNVCQCSKGFVRHGLRCIDKKDCPK</sequence>
<evidence type="ECO:0000250" key="1">
    <source>
        <dbReference type="UniProtKB" id="P83516"/>
    </source>
</evidence>
<evidence type="ECO:0000255" key="2"/>
<evidence type="ECO:0000255" key="3">
    <source>
        <dbReference type="PROSITE-ProRule" id="PRU00498"/>
    </source>
</evidence>
<evidence type="ECO:0000269" key="4">
    <source>
    </source>
</evidence>
<evidence type="ECO:0000269" key="5">
    <source>
    </source>
</evidence>
<evidence type="ECO:0000269" key="6">
    <source>
    </source>
</evidence>
<evidence type="ECO:0000305" key="7"/>
<evidence type="ECO:0000305" key="8">
    <source>
    </source>
</evidence>
<evidence type="ECO:0000312" key="9">
    <source>
        <dbReference type="Proteomes" id="UP000001940"/>
    </source>
</evidence>
<evidence type="ECO:0000312" key="10">
    <source>
        <dbReference type="WormBase" id="C25E10.9"/>
    </source>
</evidence>
<gene>
    <name evidence="10" type="primary">swm-1</name>
    <name evidence="10" type="ORF">C25E10.9</name>
</gene>
<comment type="function">
    <text evidence="4 5 6 8">Serine protease inhibitor (Probable) (PubMed:22125495). Probably by inhibiting serine protease tyr-5 in males, prevents the maturation of spermatids into mature motile spermatozoa until their transfer into a hermaphrodite (PubMed:16461278, PubMed:22125495, PubMed:30470702). Also required for efficient sperm transfer and thus for male fertility (PubMed:16461278).</text>
</comment>
<comment type="subcellular location">
    <subcellularLocation>
        <location evidence="6">Secreted</location>
    </subcellularLocation>
    <subcellularLocation>
        <location evidence="6">Cytoplasmic vesicle</location>
        <location evidence="6">Secretory vesicle lumen</location>
    </subcellularLocation>
    <text evidence="6">In males, partially colocalizes with tyr-5 in vesicles near the apical membrane of cuboidal cells. Secreted predominantly by muscles into the pseudocoelom where it enters the seminal vesicle in males and the spermatheca in hermaphrodites. Localizes around the spermatocytes at the late stages of meiosis. During mating, transferred together with sperm into hermaphrodites where it spreads into the uterus. Also, is uptaken by coelomocytes.</text>
</comment>
<comment type="tissue specificity">
    <text evidence="6">In male, expressed in the vas deferens cuboidal cells and, in posterior body wall and male-specific diagonal muscles (PubMed:30470702). In hermaphrodites, expressed in posterior body wall muscles and spermatheca (PubMed:30470702).</text>
</comment>
<comment type="developmental stage">
    <text evidence="6">In males, expression begins at late larval stage and continues in adults.</text>
</comment>
<name>SWM1_CAEEL</name>
<protein>
    <recommendedName>
        <fullName evidence="7">Serine protease inhibitor swm-1</fullName>
    </recommendedName>
    <alternativeName>
        <fullName evidence="10">Sperm activation without mating protein 1</fullName>
    </alternativeName>
</protein>
<organism evidence="9">
    <name type="scientific">Caenorhabditis elegans</name>
    <dbReference type="NCBI Taxonomy" id="6239"/>
    <lineage>
        <taxon>Eukaryota</taxon>
        <taxon>Metazoa</taxon>
        <taxon>Ecdysozoa</taxon>
        <taxon>Nematoda</taxon>
        <taxon>Chromadorea</taxon>
        <taxon>Rhabditida</taxon>
        <taxon>Rhabditina</taxon>
        <taxon>Rhabditomorpha</taxon>
        <taxon>Rhabditoidea</taxon>
        <taxon>Rhabditidae</taxon>
        <taxon>Peloderinae</taxon>
        <taxon>Caenorhabditis</taxon>
    </lineage>
</organism>
<dbReference type="EMBL" id="BX284605">
    <property type="protein sequence ID" value="CCD65654.1"/>
    <property type="molecule type" value="Genomic_DNA"/>
</dbReference>
<dbReference type="PIR" id="T15610">
    <property type="entry name" value="T15610"/>
</dbReference>
<dbReference type="RefSeq" id="NP_505346.1">
    <property type="nucleotide sequence ID" value="NM_072945.4"/>
</dbReference>
<dbReference type="FunCoup" id="Q18158">
    <property type="interactions" value="3"/>
</dbReference>
<dbReference type="STRING" id="6239.C25E10.9.1"/>
<dbReference type="GlyCosmos" id="Q18158">
    <property type="glycosylation" value="1 site, No reported glycans"/>
</dbReference>
<dbReference type="PaxDb" id="6239-C25E10.9a"/>
<dbReference type="PeptideAtlas" id="Q18158"/>
<dbReference type="EnsemblMetazoa" id="C25E10.9.1">
    <property type="protein sequence ID" value="C25E10.9.1"/>
    <property type="gene ID" value="WBGene00023417"/>
</dbReference>
<dbReference type="GeneID" id="182893"/>
<dbReference type="KEGG" id="cel:CELE_C25E10.9"/>
<dbReference type="UCSC" id="C25E10.9b.1">
    <property type="organism name" value="c. elegans"/>
</dbReference>
<dbReference type="AGR" id="WB:WBGene00023417"/>
<dbReference type="CTD" id="182893"/>
<dbReference type="WormBase" id="C25E10.9">
    <property type="protein sequence ID" value="CE06871"/>
    <property type="gene ID" value="WBGene00023417"/>
    <property type="gene designation" value="swm-1"/>
</dbReference>
<dbReference type="eggNOG" id="ENOG502SEN9">
    <property type="taxonomic scope" value="Eukaryota"/>
</dbReference>
<dbReference type="GeneTree" id="ENSGT00970000195908"/>
<dbReference type="HOGENOM" id="CLU_092192_1_0_1"/>
<dbReference type="InParanoid" id="Q18158"/>
<dbReference type="OMA" id="ACHNTCE"/>
<dbReference type="OrthoDB" id="5781320at2759"/>
<dbReference type="PhylomeDB" id="Q18158"/>
<dbReference type="PRO" id="PR:Q18158"/>
<dbReference type="Proteomes" id="UP000001940">
    <property type="component" value="Chromosome V"/>
</dbReference>
<dbReference type="Bgee" id="WBGene00023417">
    <property type="expression patterns" value="Expressed in adult organism and 4 other cell types or tissues"/>
</dbReference>
<dbReference type="GO" id="GO:0005615">
    <property type="term" value="C:extracellular space"/>
    <property type="evidence" value="ECO:0000314"/>
    <property type="project" value="UniProtKB"/>
</dbReference>
<dbReference type="GO" id="GO:0099503">
    <property type="term" value="C:secretory vesicle"/>
    <property type="evidence" value="ECO:0000314"/>
    <property type="project" value="UniProtKB"/>
</dbReference>
<dbReference type="GO" id="GO:0004867">
    <property type="term" value="F:serine-type endopeptidase inhibitor activity"/>
    <property type="evidence" value="ECO:0007669"/>
    <property type="project" value="UniProtKB-KW"/>
</dbReference>
<dbReference type="GO" id="GO:0007286">
    <property type="term" value="P:spermatid development"/>
    <property type="evidence" value="ECO:0000315"/>
    <property type="project" value="UniProtKB"/>
</dbReference>
<dbReference type="CDD" id="cd19941">
    <property type="entry name" value="TIL"/>
    <property type="match status" value="2"/>
</dbReference>
<dbReference type="Gene3D" id="2.10.25.10">
    <property type="entry name" value="Laminin"/>
    <property type="match status" value="2"/>
</dbReference>
<dbReference type="InterPro" id="IPR036084">
    <property type="entry name" value="Ser_inhib-like_sf"/>
</dbReference>
<dbReference type="InterPro" id="IPR051368">
    <property type="entry name" value="SerProtInhib-TIL_Domain"/>
</dbReference>
<dbReference type="InterPro" id="IPR002919">
    <property type="entry name" value="TIL_dom"/>
</dbReference>
<dbReference type="PANTHER" id="PTHR23259">
    <property type="entry name" value="RIDDLE"/>
    <property type="match status" value="1"/>
</dbReference>
<dbReference type="PANTHER" id="PTHR23259:SF75">
    <property type="entry name" value="SERINE PROTEASE INHIBITOR SWM-1-RELATED"/>
    <property type="match status" value="1"/>
</dbReference>
<dbReference type="Pfam" id="PF01826">
    <property type="entry name" value="TIL"/>
    <property type="match status" value="2"/>
</dbReference>
<dbReference type="SUPFAM" id="SSF57567">
    <property type="entry name" value="Serine protease inhibitors"/>
    <property type="match status" value="2"/>
</dbReference>
<keyword id="KW-0968">Cytoplasmic vesicle</keyword>
<keyword id="KW-0221">Differentiation</keyword>
<keyword id="KW-1015">Disulfide bond</keyword>
<keyword id="KW-0325">Glycoprotein</keyword>
<keyword id="KW-0646">Protease inhibitor</keyword>
<keyword id="KW-1185">Reference proteome</keyword>
<keyword id="KW-0677">Repeat</keyword>
<keyword id="KW-0964">Secreted</keyword>
<keyword id="KW-0722">Serine protease inhibitor</keyword>
<keyword id="KW-0732">Signal</keyword>
<keyword id="KW-0744">Spermatogenesis</keyword>
<accession>Q18158</accession>
<feature type="signal peptide" evidence="2">
    <location>
        <begin position="1"/>
        <end position="16"/>
    </location>
</feature>
<feature type="chain" id="PRO_5004186764" description="Serine protease inhibitor swm-1" evidence="2">
    <location>
        <begin position="17"/>
        <end position="135"/>
    </location>
</feature>
<feature type="domain" description="TIL 1" evidence="2">
    <location>
        <begin position="20"/>
        <end position="73"/>
    </location>
</feature>
<feature type="domain" description="TIL 2" evidence="2">
    <location>
        <begin position="80"/>
        <end position="133"/>
    </location>
</feature>
<feature type="glycosylation site" description="N-linked (GlcNAc...) asparagine" evidence="3">
    <location>
        <position position="83"/>
    </location>
</feature>
<feature type="disulfide bond" evidence="1">
    <location>
        <begin position="20"/>
        <end position="53"/>
    </location>
</feature>
<feature type="disulfide bond" evidence="1">
    <location>
        <begin position="29"/>
        <end position="48"/>
    </location>
</feature>
<feature type="disulfide bond" evidence="1">
    <location>
        <begin position="33"/>
        <end position="44"/>
    </location>
</feature>
<feature type="disulfide bond" evidence="1">
    <location>
        <begin position="37"/>
        <end position="73"/>
    </location>
</feature>
<feature type="disulfide bond" evidence="1">
    <location>
        <begin position="55"/>
        <end position="67"/>
    </location>
</feature>
<feature type="disulfide bond" evidence="1">
    <location>
        <begin position="80"/>
        <end position="114"/>
    </location>
</feature>
<feature type="disulfide bond" evidence="1">
    <location>
        <begin position="89"/>
        <end position="109"/>
    </location>
</feature>
<feature type="disulfide bond" evidence="1">
    <location>
        <begin position="93"/>
        <end position="105"/>
    </location>
</feature>
<feature type="disulfide bond" evidence="1">
    <location>
        <begin position="97"/>
        <end position="133"/>
    </location>
</feature>
<feature type="disulfide bond" evidence="1">
    <location>
        <begin position="116"/>
        <end position="127"/>
    </location>
</feature>
<feature type="mutagenesis site" description="In me86; severe reduction in male fertility caused by a premature activation of spermatids and impaired sperm transfer into the hermaphrodite. Seminal fluid transfer and trans-activation of hermaphrodite sperm are normal. Does not affect hermaphrodite self-fertility. In a tyr-5(jn21) mutant background, suppresses premature sperm activation in males." evidence="4">
    <original>G</original>
    <variation>E</variation>
    <location>
        <position position="38"/>
    </location>
</feature>
<feature type="mutagenesis site" description="In me66; severe reduction in male fertility caused by a premature activation of spermatids and impaired sperm transfer into the hermaphrodite. Seminal fluid transfer and trans-activation of hermaphrodite sperm are normal. In a tyr-5(jn21) mutant background, suppresses premature sperm activation in males." evidence="4 5">
    <original>C</original>
    <variation>Y</variation>
    <location>
        <position position="80"/>
    </location>
</feature>
<reference evidence="9" key="1">
    <citation type="journal article" date="1998" name="Science">
        <title>Genome sequence of the nematode C. elegans: a platform for investigating biology.</title>
        <authorList>
            <consortium name="The C. elegans sequencing consortium"/>
        </authorList>
    </citation>
    <scope>NUCLEOTIDE SEQUENCE [LARGE SCALE GENOMIC DNA]</scope>
    <source>
        <strain evidence="9">Bristol N2</strain>
    </source>
</reference>
<reference evidence="7" key="2">
    <citation type="journal article" date="2006" name="Curr. Biol.">
        <title>Regulation of sperm activation by SWM-1 is required for reproductive success of C. elegans males.</title>
        <authorList>
            <person name="Stanfield G.M."/>
            <person name="Villeneuve A.M."/>
        </authorList>
    </citation>
    <scope>FUNCTION</scope>
    <scope>MUTAGENESIS OF GLY-38 AND CYS-80</scope>
</reference>
<reference evidence="7" key="3">
    <citation type="journal article" date="2011" name="PLoS Genet.">
        <title>TRY-5 Is a Sperm-Activating Protease in Caenorhabditis elegans Seminal Fluid.</title>
        <authorList>
            <person name="Smith J.R."/>
            <person name="Stanfield G.M."/>
        </authorList>
    </citation>
    <scope>FUNCTION</scope>
    <scope>MUTAGENESIS OF GLY-38 AND CYS-80</scope>
</reference>
<reference evidence="7" key="4">
    <citation type="journal article" date="2018" name="Development">
        <title>Soma-germ line interactions and a role for muscle in the regulation of C. elegans sperm motility.</title>
        <authorList>
            <person name="Chavez D.R."/>
            <person name="Snow A.K."/>
            <person name="Smith J.R."/>
            <person name="Stanfield G.M."/>
        </authorList>
    </citation>
    <scope>FUNCTION</scope>
    <scope>SUBCELLULAR LOCATION</scope>
    <scope>TISSUE SPECIFICITY</scope>
    <scope>DEVELOPMENTAL STAGE</scope>
</reference>
<proteinExistence type="evidence at protein level"/>